<protein>
    <recommendedName>
        <fullName evidence="2">tRNA (guanine-N(7)-)-methyltransferase</fullName>
        <ecNumber evidence="2">2.1.1.33</ecNumber>
    </recommendedName>
    <alternativeName>
        <fullName evidence="2">tRNA (guanine(46)-N(7))-methyltransferase</fullName>
    </alternativeName>
    <alternativeName>
        <fullName evidence="2">tRNA(m7G46)-methyltransferase</fullName>
    </alternativeName>
</protein>
<reference key="1">
    <citation type="journal article" date="2008" name="Chem. Biol. Interact.">
        <title>Extending the Bacillus cereus group genomics to putative food-borne pathogens of different toxicity.</title>
        <authorList>
            <person name="Lapidus A."/>
            <person name="Goltsman E."/>
            <person name="Auger S."/>
            <person name="Galleron N."/>
            <person name="Segurens B."/>
            <person name="Dossat C."/>
            <person name="Land M.L."/>
            <person name="Broussolle V."/>
            <person name="Brillard J."/>
            <person name="Guinebretiere M.-H."/>
            <person name="Sanchis V."/>
            <person name="Nguen-the C."/>
            <person name="Lereclus D."/>
            <person name="Richardson P."/>
            <person name="Wincker P."/>
            <person name="Weissenbach J."/>
            <person name="Ehrlich S.D."/>
            <person name="Sorokin A."/>
        </authorList>
    </citation>
    <scope>NUCLEOTIDE SEQUENCE [LARGE SCALE GENOMIC DNA]</scope>
    <source>
        <strain>KBAB4</strain>
    </source>
</reference>
<sequence>MRLRHKPYAMDRINEYSHIVIGNPEESAGNWKEIFGNEQPIHIEVGTGRGRFMYDMAKANPHINYIGIEKFTSVVVDALDKLIEEEVPNLKLINKDAEDLTVFFAKGEIDRVYLNFSDPWPKNRHTKRRLTYKTFLRNYEEVLVDGGEIHFKTDNQGLFEYSIMSMAEYGMLLTYLSLDLHNSDYEGNIMTEYEEKFSSKGHRIYRVEAKYRTEPMQ</sequence>
<feature type="chain" id="PRO_1000136342" description="tRNA (guanine-N(7)-)-methyltransferase">
    <location>
        <begin position="1"/>
        <end position="217"/>
    </location>
</feature>
<feature type="active site" evidence="1">
    <location>
        <position position="118"/>
    </location>
</feature>
<feature type="binding site" evidence="2">
    <location>
        <position position="44"/>
    </location>
    <ligand>
        <name>S-adenosyl-L-methionine</name>
        <dbReference type="ChEBI" id="CHEBI:59789"/>
    </ligand>
</feature>
<feature type="binding site" evidence="2">
    <location>
        <position position="69"/>
    </location>
    <ligand>
        <name>S-adenosyl-L-methionine</name>
        <dbReference type="ChEBI" id="CHEBI:59789"/>
    </ligand>
</feature>
<feature type="binding site" evidence="2">
    <location>
        <position position="96"/>
    </location>
    <ligand>
        <name>S-adenosyl-L-methionine</name>
        <dbReference type="ChEBI" id="CHEBI:59789"/>
    </ligand>
</feature>
<feature type="binding site" evidence="2">
    <location>
        <position position="118"/>
    </location>
    <ligand>
        <name>S-adenosyl-L-methionine</name>
        <dbReference type="ChEBI" id="CHEBI:59789"/>
    </ligand>
</feature>
<feature type="binding site" evidence="2">
    <location>
        <position position="122"/>
    </location>
    <ligand>
        <name>substrate</name>
    </ligand>
</feature>
<feature type="binding site" evidence="2">
    <location>
        <position position="154"/>
    </location>
    <ligand>
        <name>substrate</name>
    </ligand>
</feature>
<feature type="binding site" evidence="2">
    <location>
        <begin position="191"/>
        <end position="194"/>
    </location>
    <ligand>
        <name>substrate</name>
    </ligand>
</feature>
<dbReference type="EC" id="2.1.1.33" evidence="2"/>
<dbReference type="EMBL" id="CP000903">
    <property type="protein sequence ID" value="ABY45686.1"/>
    <property type="molecule type" value="Genomic_DNA"/>
</dbReference>
<dbReference type="RefSeq" id="WP_002015624.1">
    <property type="nucleotide sequence ID" value="NC_010184.1"/>
</dbReference>
<dbReference type="SMR" id="A9VKK9"/>
<dbReference type="GeneID" id="66265740"/>
<dbReference type="KEGG" id="bwe:BcerKBAB4_4530"/>
<dbReference type="eggNOG" id="COG0220">
    <property type="taxonomic scope" value="Bacteria"/>
</dbReference>
<dbReference type="HOGENOM" id="CLU_050910_2_1_9"/>
<dbReference type="UniPathway" id="UPA00989"/>
<dbReference type="Proteomes" id="UP000002154">
    <property type="component" value="Chromosome"/>
</dbReference>
<dbReference type="GO" id="GO:0043527">
    <property type="term" value="C:tRNA methyltransferase complex"/>
    <property type="evidence" value="ECO:0007669"/>
    <property type="project" value="TreeGrafter"/>
</dbReference>
<dbReference type="GO" id="GO:0008176">
    <property type="term" value="F:tRNA (guanine(46)-N7)-methyltransferase activity"/>
    <property type="evidence" value="ECO:0007669"/>
    <property type="project" value="UniProtKB-UniRule"/>
</dbReference>
<dbReference type="CDD" id="cd02440">
    <property type="entry name" value="AdoMet_MTases"/>
    <property type="match status" value="1"/>
</dbReference>
<dbReference type="FunFam" id="3.40.50.150:FF:000035">
    <property type="entry name" value="tRNA (guanine-N(7)-)-methyltransferase"/>
    <property type="match status" value="1"/>
</dbReference>
<dbReference type="Gene3D" id="3.40.50.150">
    <property type="entry name" value="Vaccinia Virus protein VP39"/>
    <property type="match status" value="1"/>
</dbReference>
<dbReference type="HAMAP" id="MF_01057">
    <property type="entry name" value="tRNA_methyltr_TrmB"/>
    <property type="match status" value="1"/>
</dbReference>
<dbReference type="InterPro" id="IPR029063">
    <property type="entry name" value="SAM-dependent_MTases_sf"/>
</dbReference>
<dbReference type="InterPro" id="IPR003358">
    <property type="entry name" value="tRNA_(Gua-N-7)_MeTrfase_Trmb"/>
</dbReference>
<dbReference type="InterPro" id="IPR055361">
    <property type="entry name" value="tRNA_methyltr_TrmB_bact"/>
</dbReference>
<dbReference type="NCBIfam" id="NF001080">
    <property type="entry name" value="PRK00121.2-2"/>
    <property type="match status" value="1"/>
</dbReference>
<dbReference type="NCBIfam" id="TIGR00091">
    <property type="entry name" value="tRNA (guanosine(46)-N7)-methyltransferase TrmB"/>
    <property type="match status" value="1"/>
</dbReference>
<dbReference type="PANTHER" id="PTHR23417">
    <property type="entry name" value="3-DEOXY-D-MANNO-OCTULOSONIC-ACID TRANSFERASE/TRNA GUANINE-N 7 - -METHYLTRANSFERASE"/>
    <property type="match status" value="1"/>
</dbReference>
<dbReference type="PANTHER" id="PTHR23417:SF14">
    <property type="entry name" value="PENTACOTRIPEPTIDE-REPEAT REGION OF PRORP DOMAIN-CONTAINING PROTEIN"/>
    <property type="match status" value="1"/>
</dbReference>
<dbReference type="Pfam" id="PF02390">
    <property type="entry name" value="Methyltransf_4"/>
    <property type="match status" value="1"/>
</dbReference>
<dbReference type="SUPFAM" id="SSF53335">
    <property type="entry name" value="S-adenosyl-L-methionine-dependent methyltransferases"/>
    <property type="match status" value="1"/>
</dbReference>
<dbReference type="PROSITE" id="PS51625">
    <property type="entry name" value="SAM_MT_TRMB"/>
    <property type="match status" value="1"/>
</dbReference>
<organism>
    <name type="scientific">Bacillus mycoides (strain KBAB4)</name>
    <name type="common">Bacillus weihenstephanensis</name>
    <dbReference type="NCBI Taxonomy" id="315730"/>
    <lineage>
        <taxon>Bacteria</taxon>
        <taxon>Bacillati</taxon>
        <taxon>Bacillota</taxon>
        <taxon>Bacilli</taxon>
        <taxon>Bacillales</taxon>
        <taxon>Bacillaceae</taxon>
        <taxon>Bacillus</taxon>
        <taxon>Bacillus cereus group</taxon>
    </lineage>
</organism>
<proteinExistence type="inferred from homology"/>
<keyword id="KW-0489">Methyltransferase</keyword>
<keyword id="KW-0949">S-adenosyl-L-methionine</keyword>
<keyword id="KW-0808">Transferase</keyword>
<keyword id="KW-0819">tRNA processing</keyword>
<gene>
    <name evidence="2" type="primary">trmB</name>
    <name type="ordered locus">BcerKBAB4_4530</name>
</gene>
<evidence type="ECO:0000250" key="1"/>
<evidence type="ECO:0000255" key="2">
    <source>
        <dbReference type="HAMAP-Rule" id="MF_01057"/>
    </source>
</evidence>
<comment type="function">
    <text evidence="2">Catalyzes the formation of N(7)-methylguanine at position 46 (m7G46) in tRNA.</text>
</comment>
<comment type="catalytic activity">
    <reaction evidence="2">
        <text>guanosine(46) in tRNA + S-adenosyl-L-methionine = N(7)-methylguanosine(46) in tRNA + S-adenosyl-L-homocysteine</text>
        <dbReference type="Rhea" id="RHEA:42708"/>
        <dbReference type="Rhea" id="RHEA-COMP:10188"/>
        <dbReference type="Rhea" id="RHEA-COMP:10189"/>
        <dbReference type="ChEBI" id="CHEBI:57856"/>
        <dbReference type="ChEBI" id="CHEBI:59789"/>
        <dbReference type="ChEBI" id="CHEBI:74269"/>
        <dbReference type="ChEBI" id="CHEBI:74480"/>
        <dbReference type="EC" id="2.1.1.33"/>
    </reaction>
</comment>
<comment type="pathway">
    <text evidence="2">tRNA modification; N(7)-methylguanine-tRNA biosynthesis.</text>
</comment>
<comment type="similarity">
    <text evidence="2">Belongs to the class I-like SAM-binding methyltransferase superfamily. TrmB family.</text>
</comment>
<accession>A9VKK9</accession>
<name>TRMB_BACMK</name>